<evidence type="ECO:0000255" key="1">
    <source>
        <dbReference type="HAMAP-Rule" id="MF_01208"/>
    </source>
</evidence>
<keyword id="KW-0328">Glycosyltransferase</keyword>
<keyword id="KW-0460">Magnesium</keyword>
<keyword id="KW-0665">Pyrimidine biosynthesis</keyword>
<keyword id="KW-1185">Reference proteome</keyword>
<keyword id="KW-0808">Transferase</keyword>
<feature type="chain" id="PRO_1000085550" description="Orotate phosphoribosyltransferase">
    <location>
        <begin position="1"/>
        <end position="213"/>
    </location>
</feature>
<feature type="binding site" description="in other chain" evidence="1">
    <location>
        <position position="26"/>
    </location>
    <ligand>
        <name>5-phospho-alpha-D-ribose 1-diphosphate</name>
        <dbReference type="ChEBI" id="CHEBI:58017"/>
        <note>ligand shared between dimeric partners</note>
    </ligand>
</feature>
<feature type="binding site" evidence="1">
    <location>
        <begin position="34"/>
        <end position="35"/>
    </location>
    <ligand>
        <name>orotate</name>
        <dbReference type="ChEBI" id="CHEBI:30839"/>
    </ligand>
</feature>
<feature type="binding site" description="in other chain" evidence="1">
    <location>
        <begin position="72"/>
        <end position="73"/>
    </location>
    <ligand>
        <name>5-phospho-alpha-D-ribose 1-diphosphate</name>
        <dbReference type="ChEBI" id="CHEBI:58017"/>
        <note>ligand shared between dimeric partners</note>
    </ligand>
</feature>
<feature type="binding site" evidence="1">
    <location>
        <position position="99"/>
    </location>
    <ligand>
        <name>5-phospho-alpha-D-ribose 1-diphosphate</name>
        <dbReference type="ChEBI" id="CHEBI:58017"/>
        <note>ligand shared between dimeric partners</note>
    </ligand>
</feature>
<feature type="binding site" description="in other chain" evidence="1">
    <location>
        <position position="100"/>
    </location>
    <ligand>
        <name>5-phospho-alpha-D-ribose 1-diphosphate</name>
        <dbReference type="ChEBI" id="CHEBI:58017"/>
        <note>ligand shared between dimeric partners</note>
    </ligand>
</feature>
<feature type="binding site" evidence="1">
    <location>
        <position position="103"/>
    </location>
    <ligand>
        <name>5-phospho-alpha-D-ribose 1-diphosphate</name>
        <dbReference type="ChEBI" id="CHEBI:58017"/>
        <note>ligand shared between dimeric partners</note>
    </ligand>
</feature>
<feature type="binding site" evidence="1">
    <location>
        <position position="105"/>
    </location>
    <ligand>
        <name>5-phospho-alpha-D-ribose 1-diphosphate</name>
        <dbReference type="ChEBI" id="CHEBI:58017"/>
        <note>ligand shared between dimeric partners</note>
    </ligand>
</feature>
<feature type="binding site" description="in other chain" evidence="1">
    <location>
        <begin position="124"/>
        <end position="132"/>
    </location>
    <ligand>
        <name>5-phospho-alpha-D-ribose 1-diphosphate</name>
        <dbReference type="ChEBI" id="CHEBI:58017"/>
        <note>ligand shared between dimeric partners</note>
    </ligand>
</feature>
<feature type="binding site" evidence="1">
    <location>
        <position position="128"/>
    </location>
    <ligand>
        <name>orotate</name>
        <dbReference type="ChEBI" id="CHEBI:30839"/>
    </ligand>
</feature>
<feature type="binding site" evidence="1">
    <location>
        <position position="156"/>
    </location>
    <ligand>
        <name>orotate</name>
        <dbReference type="ChEBI" id="CHEBI:30839"/>
    </ligand>
</feature>
<comment type="function">
    <text evidence="1">Catalyzes the transfer of a ribosyl phosphate group from 5-phosphoribose 1-diphosphate to orotate, leading to the formation of orotidine monophosphate (OMP).</text>
</comment>
<comment type="catalytic activity">
    <reaction evidence="1">
        <text>orotidine 5'-phosphate + diphosphate = orotate + 5-phospho-alpha-D-ribose 1-diphosphate</text>
        <dbReference type="Rhea" id="RHEA:10380"/>
        <dbReference type="ChEBI" id="CHEBI:30839"/>
        <dbReference type="ChEBI" id="CHEBI:33019"/>
        <dbReference type="ChEBI" id="CHEBI:57538"/>
        <dbReference type="ChEBI" id="CHEBI:58017"/>
        <dbReference type="EC" id="2.4.2.10"/>
    </reaction>
</comment>
<comment type="cofactor">
    <cofactor evidence="1">
        <name>Mg(2+)</name>
        <dbReference type="ChEBI" id="CHEBI:18420"/>
    </cofactor>
</comment>
<comment type="pathway">
    <text evidence="1">Pyrimidine metabolism; UMP biosynthesis via de novo pathway; UMP from orotate: step 1/2.</text>
</comment>
<comment type="subunit">
    <text evidence="1">Homodimer.</text>
</comment>
<comment type="similarity">
    <text evidence="1">Belongs to the purine/pyrimidine phosphoribosyltransferase family. PyrE subfamily.</text>
</comment>
<dbReference type="EC" id="2.4.2.10" evidence="1"/>
<dbReference type="EMBL" id="CP000880">
    <property type="protein sequence ID" value="ABX23702.1"/>
    <property type="molecule type" value="Genomic_DNA"/>
</dbReference>
<dbReference type="SMR" id="A9MKN3"/>
<dbReference type="STRING" id="41514.SARI_03908"/>
<dbReference type="KEGG" id="ses:SARI_03908"/>
<dbReference type="HOGENOM" id="CLU_074878_0_1_6"/>
<dbReference type="UniPathway" id="UPA00070">
    <property type="reaction ID" value="UER00119"/>
</dbReference>
<dbReference type="Proteomes" id="UP000002084">
    <property type="component" value="Chromosome"/>
</dbReference>
<dbReference type="GO" id="GO:0005737">
    <property type="term" value="C:cytoplasm"/>
    <property type="evidence" value="ECO:0007669"/>
    <property type="project" value="TreeGrafter"/>
</dbReference>
<dbReference type="GO" id="GO:0000287">
    <property type="term" value="F:magnesium ion binding"/>
    <property type="evidence" value="ECO:0007669"/>
    <property type="project" value="UniProtKB-UniRule"/>
</dbReference>
<dbReference type="GO" id="GO:0004588">
    <property type="term" value="F:orotate phosphoribosyltransferase activity"/>
    <property type="evidence" value="ECO:0007669"/>
    <property type="project" value="UniProtKB-UniRule"/>
</dbReference>
<dbReference type="GO" id="GO:0006207">
    <property type="term" value="P:'de novo' pyrimidine nucleobase biosynthetic process"/>
    <property type="evidence" value="ECO:0007669"/>
    <property type="project" value="TreeGrafter"/>
</dbReference>
<dbReference type="GO" id="GO:0044205">
    <property type="term" value="P:'de novo' UMP biosynthetic process"/>
    <property type="evidence" value="ECO:0007669"/>
    <property type="project" value="UniProtKB-UniRule"/>
</dbReference>
<dbReference type="GO" id="GO:0046132">
    <property type="term" value="P:pyrimidine ribonucleoside biosynthetic process"/>
    <property type="evidence" value="ECO:0007669"/>
    <property type="project" value="TreeGrafter"/>
</dbReference>
<dbReference type="CDD" id="cd06223">
    <property type="entry name" value="PRTases_typeI"/>
    <property type="match status" value="1"/>
</dbReference>
<dbReference type="FunFam" id="3.40.50.2020:FF:000008">
    <property type="entry name" value="Orotate phosphoribosyltransferase"/>
    <property type="match status" value="1"/>
</dbReference>
<dbReference type="Gene3D" id="3.40.50.2020">
    <property type="match status" value="1"/>
</dbReference>
<dbReference type="HAMAP" id="MF_01208">
    <property type="entry name" value="PyrE"/>
    <property type="match status" value="1"/>
</dbReference>
<dbReference type="InterPro" id="IPR023031">
    <property type="entry name" value="OPRT"/>
</dbReference>
<dbReference type="InterPro" id="IPR004467">
    <property type="entry name" value="Or_phspho_trans_dom"/>
</dbReference>
<dbReference type="InterPro" id="IPR000836">
    <property type="entry name" value="PRibTrfase_dom"/>
</dbReference>
<dbReference type="InterPro" id="IPR029057">
    <property type="entry name" value="PRTase-like"/>
</dbReference>
<dbReference type="NCBIfam" id="TIGR00336">
    <property type="entry name" value="pyrE"/>
    <property type="match status" value="1"/>
</dbReference>
<dbReference type="PANTHER" id="PTHR46683">
    <property type="entry name" value="OROTATE PHOSPHORIBOSYLTRANSFERASE 1-RELATED"/>
    <property type="match status" value="1"/>
</dbReference>
<dbReference type="PANTHER" id="PTHR46683:SF1">
    <property type="entry name" value="OROTATE PHOSPHORIBOSYLTRANSFERASE 1-RELATED"/>
    <property type="match status" value="1"/>
</dbReference>
<dbReference type="Pfam" id="PF00156">
    <property type="entry name" value="Pribosyltran"/>
    <property type="match status" value="1"/>
</dbReference>
<dbReference type="SUPFAM" id="SSF53271">
    <property type="entry name" value="PRTase-like"/>
    <property type="match status" value="1"/>
</dbReference>
<dbReference type="PROSITE" id="PS00103">
    <property type="entry name" value="PUR_PYR_PR_TRANSFER"/>
    <property type="match status" value="1"/>
</dbReference>
<sequence>MKPYQRQFIEFALDKQVLKFGEFTLKSGRKSPYFFNAGLFNTGRDLALLGRFYAEALVDSGIEFDLLFGPAYKGIPIATTTAVALAEHHDKDLPYCFNRKEAKDHGEGGNLVGSALRGRVMLVDDVITAGTAIRESMEIIQAHGATLAGVLISLDRQERGRSEISAIHEVERDYGCNVISIITLKDLITYLEEKPEMAEHLAAVRAYWEEFGV</sequence>
<reference key="1">
    <citation type="submission" date="2007-11" db="EMBL/GenBank/DDBJ databases">
        <authorList>
            <consortium name="The Salmonella enterica serovar Arizonae Genome Sequencing Project"/>
            <person name="McClelland M."/>
            <person name="Sanderson E.K."/>
            <person name="Porwollik S."/>
            <person name="Spieth J."/>
            <person name="Clifton W.S."/>
            <person name="Fulton R."/>
            <person name="Chunyan W."/>
            <person name="Wollam A."/>
            <person name="Shah N."/>
            <person name="Pepin K."/>
            <person name="Bhonagiri V."/>
            <person name="Nash W."/>
            <person name="Johnson M."/>
            <person name="Thiruvilangam P."/>
            <person name="Wilson R."/>
        </authorList>
    </citation>
    <scope>NUCLEOTIDE SEQUENCE [LARGE SCALE GENOMIC DNA]</scope>
    <source>
        <strain>ATCC BAA-731 / CDC346-86 / RSK2980</strain>
    </source>
</reference>
<gene>
    <name evidence="1" type="primary">pyrE</name>
    <name type="ordered locus">SARI_03908</name>
</gene>
<organism>
    <name type="scientific">Salmonella arizonae (strain ATCC BAA-731 / CDC346-86 / RSK2980)</name>
    <dbReference type="NCBI Taxonomy" id="41514"/>
    <lineage>
        <taxon>Bacteria</taxon>
        <taxon>Pseudomonadati</taxon>
        <taxon>Pseudomonadota</taxon>
        <taxon>Gammaproteobacteria</taxon>
        <taxon>Enterobacterales</taxon>
        <taxon>Enterobacteriaceae</taxon>
        <taxon>Salmonella</taxon>
    </lineage>
</organism>
<protein>
    <recommendedName>
        <fullName evidence="1">Orotate phosphoribosyltransferase</fullName>
        <shortName evidence="1">OPRT</shortName>
        <shortName evidence="1">OPRTase</shortName>
        <ecNumber evidence="1">2.4.2.10</ecNumber>
    </recommendedName>
</protein>
<name>PYRE_SALAR</name>
<proteinExistence type="inferred from homology"/>
<accession>A9MKN3</accession>